<name>STHA_MYCBT</name>
<sequence>MREYDIVVIGSGPGGQKAAIASAKLGKSVAIVERGRMLGGVCVNTGTIPSKTLREAVLYLTGMNQRELYGASYRVKDRITPADLLARTQHVIGKEVDVVRNQLMRNRVDLIVGHGRFIDPHTILVEDQARREKTTVTGDYIIIATGTRPARPSGVEFDEERVLDSDGILDLKSLPSSMVVVGAGVIGIEYASMFAALGTKVTVVEKRDNMLDFCDPEVVEALKFHLRDLAVTFRFGEEVTAVDVGSAGTVTTLASGKQIPAETVMYSAGRQGQTDHLDLHNAGLEVQGRGRIFVDDRFQTKVDHIYAVGDVIGFPALAATSMEQGRLAAYHAFGEPTDGITELQPIGIYSIPEVSYVGATEVELTKSSIPYEVGVARYRELARGQIAGDSYGMLKLLVSTEDLKLLGVHIFGTSATEMVHIGQAVMGCGGSVEYLVDAVFNYPTFSEAYKNAALDVMNKMRALNQFRR</sequence>
<evidence type="ECO:0000255" key="1">
    <source>
        <dbReference type="HAMAP-Rule" id="MF_00247"/>
    </source>
</evidence>
<accession>C1AFH2</accession>
<reference key="1">
    <citation type="journal article" date="2009" name="Vaccine">
        <title>Whole genome sequence analysis of Mycobacterium bovis bacillus Calmette-Guerin (BCG) Tokyo 172: a comparative study of BCG vaccine substrains.</title>
        <authorList>
            <person name="Seki M."/>
            <person name="Honda I."/>
            <person name="Fujita I."/>
            <person name="Yano I."/>
            <person name="Yamamoto S."/>
            <person name="Koyama A."/>
        </authorList>
    </citation>
    <scope>NUCLEOTIDE SEQUENCE [LARGE SCALE GENOMIC DNA]</scope>
    <source>
        <strain>BCG / Tokyo 172 / ATCC 35737 / TMC 1019</strain>
    </source>
</reference>
<dbReference type="EC" id="1.6.1.1" evidence="1"/>
<dbReference type="EMBL" id="AP010918">
    <property type="protein sequence ID" value="BAH27001.1"/>
    <property type="molecule type" value="Genomic_DNA"/>
</dbReference>
<dbReference type="RefSeq" id="WP_003900556.1">
    <property type="nucleotide sequence ID" value="NZ_CP014566.1"/>
</dbReference>
<dbReference type="SMR" id="C1AFH2"/>
<dbReference type="GeneID" id="45426700"/>
<dbReference type="KEGG" id="mbt:JTY_2720"/>
<dbReference type="HOGENOM" id="CLU_016755_0_0_11"/>
<dbReference type="GO" id="GO:0005829">
    <property type="term" value="C:cytosol"/>
    <property type="evidence" value="ECO:0007669"/>
    <property type="project" value="TreeGrafter"/>
</dbReference>
<dbReference type="GO" id="GO:0004148">
    <property type="term" value="F:dihydrolipoyl dehydrogenase (NADH) activity"/>
    <property type="evidence" value="ECO:0007669"/>
    <property type="project" value="TreeGrafter"/>
</dbReference>
<dbReference type="GO" id="GO:0050660">
    <property type="term" value="F:flavin adenine dinucleotide binding"/>
    <property type="evidence" value="ECO:0007669"/>
    <property type="project" value="TreeGrafter"/>
</dbReference>
<dbReference type="GO" id="GO:0003957">
    <property type="term" value="F:NAD(P)+ transhydrogenase (Si-specific) activity"/>
    <property type="evidence" value="ECO:0007669"/>
    <property type="project" value="UniProtKB-UniRule"/>
</dbReference>
<dbReference type="GO" id="GO:0006103">
    <property type="term" value="P:2-oxoglutarate metabolic process"/>
    <property type="evidence" value="ECO:0007669"/>
    <property type="project" value="TreeGrafter"/>
</dbReference>
<dbReference type="GO" id="GO:0006739">
    <property type="term" value="P:NADP metabolic process"/>
    <property type="evidence" value="ECO:0007669"/>
    <property type="project" value="UniProtKB-UniRule"/>
</dbReference>
<dbReference type="FunFam" id="3.30.390.30:FF:000001">
    <property type="entry name" value="Dihydrolipoyl dehydrogenase"/>
    <property type="match status" value="1"/>
</dbReference>
<dbReference type="FunFam" id="3.50.50.60:FF:000008">
    <property type="entry name" value="Soluble pyridine nucleotide transhydrogenase"/>
    <property type="match status" value="1"/>
</dbReference>
<dbReference type="Gene3D" id="3.30.390.30">
    <property type="match status" value="1"/>
</dbReference>
<dbReference type="Gene3D" id="3.50.50.60">
    <property type="entry name" value="FAD/NAD(P)-binding domain"/>
    <property type="match status" value="2"/>
</dbReference>
<dbReference type="HAMAP" id="MF_00247">
    <property type="entry name" value="SthA"/>
    <property type="match status" value="1"/>
</dbReference>
<dbReference type="InterPro" id="IPR050151">
    <property type="entry name" value="Class-I_Pyr_Nuc-Dis_Oxidored"/>
</dbReference>
<dbReference type="InterPro" id="IPR036188">
    <property type="entry name" value="FAD/NAD-bd_sf"/>
</dbReference>
<dbReference type="InterPro" id="IPR023753">
    <property type="entry name" value="FAD/NAD-binding_dom"/>
</dbReference>
<dbReference type="InterPro" id="IPR016156">
    <property type="entry name" value="FAD/NAD-linked_Rdtase_dimer_sf"/>
</dbReference>
<dbReference type="InterPro" id="IPR001100">
    <property type="entry name" value="Pyr_nuc-diS_OxRdtase"/>
</dbReference>
<dbReference type="InterPro" id="IPR004099">
    <property type="entry name" value="Pyr_nucl-diS_OxRdtase_dimer"/>
</dbReference>
<dbReference type="InterPro" id="IPR022962">
    <property type="entry name" value="STH_gammaproteobact"/>
</dbReference>
<dbReference type="NCBIfam" id="NF003585">
    <property type="entry name" value="PRK05249.1"/>
    <property type="match status" value="1"/>
</dbReference>
<dbReference type="PANTHER" id="PTHR22912">
    <property type="entry name" value="DISULFIDE OXIDOREDUCTASE"/>
    <property type="match status" value="1"/>
</dbReference>
<dbReference type="PANTHER" id="PTHR22912:SF93">
    <property type="entry name" value="SOLUBLE PYRIDINE NUCLEOTIDE TRANSHYDROGENASE"/>
    <property type="match status" value="1"/>
</dbReference>
<dbReference type="Pfam" id="PF07992">
    <property type="entry name" value="Pyr_redox_2"/>
    <property type="match status" value="1"/>
</dbReference>
<dbReference type="Pfam" id="PF02852">
    <property type="entry name" value="Pyr_redox_dim"/>
    <property type="match status" value="1"/>
</dbReference>
<dbReference type="PIRSF" id="PIRSF000350">
    <property type="entry name" value="Mercury_reductase_MerA"/>
    <property type="match status" value="1"/>
</dbReference>
<dbReference type="PRINTS" id="PR00368">
    <property type="entry name" value="FADPNR"/>
</dbReference>
<dbReference type="PRINTS" id="PR00411">
    <property type="entry name" value="PNDRDTASEI"/>
</dbReference>
<dbReference type="SUPFAM" id="SSF51905">
    <property type="entry name" value="FAD/NAD(P)-binding domain"/>
    <property type="match status" value="1"/>
</dbReference>
<dbReference type="SUPFAM" id="SSF55424">
    <property type="entry name" value="FAD/NAD-linked reductases, dimerisation (C-terminal) domain"/>
    <property type="match status" value="1"/>
</dbReference>
<comment type="function">
    <text evidence="1">Conversion of NADPH, generated by peripheral catabolic pathways, to NADH, which can enter the respiratory chain for energy generation.</text>
</comment>
<comment type="catalytic activity">
    <reaction evidence="1">
        <text>NAD(+) + NADPH = NADH + NADP(+)</text>
        <dbReference type="Rhea" id="RHEA:11692"/>
        <dbReference type="ChEBI" id="CHEBI:57540"/>
        <dbReference type="ChEBI" id="CHEBI:57783"/>
        <dbReference type="ChEBI" id="CHEBI:57945"/>
        <dbReference type="ChEBI" id="CHEBI:58349"/>
        <dbReference type="EC" id="1.6.1.1"/>
    </reaction>
</comment>
<comment type="cofactor">
    <cofactor evidence="1">
        <name>FAD</name>
        <dbReference type="ChEBI" id="CHEBI:57692"/>
    </cofactor>
    <text evidence="1">Binds 1 FAD per subunit.</text>
</comment>
<comment type="subcellular location">
    <subcellularLocation>
        <location evidence="1">Cytoplasm</location>
    </subcellularLocation>
</comment>
<comment type="similarity">
    <text evidence="1">Belongs to the class-I pyridine nucleotide-disulfide oxidoreductase family.</text>
</comment>
<proteinExistence type="inferred from homology"/>
<keyword id="KW-0963">Cytoplasm</keyword>
<keyword id="KW-0274">FAD</keyword>
<keyword id="KW-0285">Flavoprotein</keyword>
<keyword id="KW-0520">NAD</keyword>
<keyword id="KW-0521">NADP</keyword>
<keyword id="KW-0560">Oxidoreductase</keyword>
<gene>
    <name evidence="1" type="primary">sthA</name>
    <name type="ordered locus">JTY_2720</name>
</gene>
<organism>
    <name type="scientific">Mycobacterium bovis (strain BCG / Tokyo 172 / ATCC 35737 / TMC 1019)</name>
    <dbReference type="NCBI Taxonomy" id="561275"/>
    <lineage>
        <taxon>Bacteria</taxon>
        <taxon>Bacillati</taxon>
        <taxon>Actinomycetota</taxon>
        <taxon>Actinomycetes</taxon>
        <taxon>Mycobacteriales</taxon>
        <taxon>Mycobacteriaceae</taxon>
        <taxon>Mycobacterium</taxon>
        <taxon>Mycobacterium tuberculosis complex</taxon>
    </lineage>
</organism>
<feature type="chain" id="PRO_1000193457" description="Soluble pyridine nucleotide transhydrogenase">
    <location>
        <begin position="1"/>
        <end position="468"/>
    </location>
</feature>
<feature type="binding site" evidence="1">
    <location>
        <begin position="33"/>
        <end position="42"/>
    </location>
    <ligand>
        <name>FAD</name>
        <dbReference type="ChEBI" id="CHEBI:57692"/>
    </ligand>
</feature>
<protein>
    <recommendedName>
        <fullName evidence="1">Soluble pyridine nucleotide transhydrogenase</fullName>
        <shortName evidence="1">STH</shortName>
        <ecNumber evidence="1">1.6.1.1</ecNumber>
    </recommendedName>
    <alternativeName>
        <fullName evidence="1">NAD(P)(+) transhydrogenase [B-specific]</fullName>
    </alternativeName>
</protein>